<reference key="1">
    <citation type="journal article" date="2005" name="J. Bacteriol.">
        <title>Genomic sequence of an otitis media isolate of nontypeable Haemophilus influenzae: comparative study with H. influenzae serotype d, strain KW20.</title>
        <authorList>
            <person name="Harrison A."/>
            <person name="Dyer D.W."/>
            <person name="Gillaspy A."/>
            <person name="Ray W.C."/>
            <person name="Mungur R."/>
            <person name="Carson M.B."/>
            <person name="Zhong H."/>
            <person name="Gipson J."/>
            <person name="Gipson M."/>
            <person name="Johnson L.S."/>
            <person name="Lewis L."/>
            <person name="Bakaletz L.O."/>
            <person name="Munson R.S. Jr."/>
        </authorList>
    </citation>
    <scope>NUCLEOTIDE SEQUENCE [LARGE SCALE GENOMIC DNA]</scope>
    <source>
        <strain>86-028NP</strain>
    </source>
</reference>
<accession>Q4QK77</accession>
<sequence length="643" mass="73607">MPIITLPDGSQRQFDRPVSVLEVAQDIGAGLAKATIAGRVNGERRDACDVIEQDATLEIITAKDEDGLEIIRHSCAHLLGHAIKQLFPDVKMAIGPTIENGFYYDVDLDRSLTQEDIDAIEKRMLELAKTNYDVVKKRVTWQEARDTFEKRGEPYKMAILDENIERTATPALYHHLEYIDMCRGPHVPNMRFCQHFKLQKVAGAYWRGDSKNKMLQRIYGTAWADKKQLAEYLTRLEEAAKRDHRKIGKALDLYHMQEEAPGMVFWHNDGWTIFRELETFVRTKLKQYDYQEVKGPFMMDRVLWEKTGHWQNYADLMFTTQSENREYAIKPMNCPGHVQIFNQGLKSYRDLPIRMAEFGSCHRNEPSGSLHGLMRVRGFTQDDAHIFCTEDQIESEVTSCIKMVYDIYSTFGFTNIAVKLSTRPENRIGSDEMWDRAEAGLAAALAHNGLEYEIQEGEGAFYGPKIEFALRDCLGREWQCGTVQLDFALPGRLDATYVAEDNSRKTPVMIHRAILGSIERFIGIITEEYAGFFPAWLAPTQAVVMNITDSQADYVQQVVKTLSDAGLRVKADLRNEKVGFKIREHTLRRVPYMLVCGDKEIAEGKVAVRTRKGADLGTFTVEEFAEILKNQVRSRELKLLNEE</sequence>
<keyword id="KW-0030">Aminoacyl-tRNA synthetase</keyword>
<keyword id="KW-0067">ATP-binding</keyword>
<keyword id="KW-0963">Cytoplasm</keyword>
<keyword id="KW-0436">Ligase</keyword>
<keyword id="KW-0479">Metal-binding</keyword>
<keyword id="KW-0547">Nucleotide-binding</keyword>
<keyword id="KW-0648">Protein biosynthesis</keyword>
<keyword id="KW-0694">RNA-binding</keyword>
<keyword id="KW-0820">tRNA-binding</keyword>
<keyword id="KW-0862">Zinc</keyword>
<proteinExistence type="inferred from homology"/>
<name>SYT_HAEI8</name>
<protein>
    <recommendedName>
        <fullName evidence="1">Threonine--tRNA ligase</fullName>
        <ecNumber evidence="1">6.1.1.3</ecNumber>
    </recommendedName>
    <alternativeName>
        <fullName evidence="1">Threonyl-tRNA synthetase</fullName>
        <shortName evidence="1">ThrRS</shortName>
    </alternativeName>
</protein>
<dbReference type="EC" id="6.1.1.3" evidence="1"/>
<dbReference type="EMBL" id="CP000057">
    <property type="protein sequence ID" value="AAX88570.1"/>
    <property type="molecule type" value="Genomic_DNA"/>
</dbReference>
<dbReference type="RefSeq" id="WP_011272637.1">
    <property type="nucleotide sequence ID" value="NC_007146.2"/>
</dbReference>
<dbReference type="SMR" id="Q4QK77"/>
<dbReference type="KEGG" id="hit:NTHI1797"/>
<dbReference type="HOGENOM" id="CLU_008554_0_1_6"/>
<dbReference type="Proteomes" id="UP000002525">
    <property type="component" value="Chromosome"/>
</dbReference>
<dbReference type="GO" id="GO:0005829">
    <property type="term" value="C:cytosol"/>
    <property type="evidence" value="ECO:0007669"/>
    <property type="project" value="TreeGrafter"/>
</dbReference>
<dbReference type="GO" id="GO:0005524">
    <property type="term" value="F:ATP binding"/>
    <property type="evidence" value="ECO:0007669"/>
    <property type="project" value="UniProtKB-UniRule"/>
</dbReference>
<dbReference type="GO" id="GO:0046872">
    <property type="term" value="F:metal ion binding"/>
    <property type="evidence" value="ECO:0007669"/>
    <property type="project" value="UniProtKB-KW"/>
</dbReference>
<dbReference type="GO" id="GO:0004829">
    <property type="term" value="F:threonine-tRNA ligase activity"/>
    <property type="evidence" value="ECO:0007669"/>
    <property type="project" value="UniProtKB-UniRule"/>
</dbReference>
<dbReference type="GO" id="GO:0000049">
    <property type="term" value="F:tRNA binding"/>
    <property type="evidence" value="ECO:0007669"/>
    <property type="project" value="UniProtKB-KW"/>
</dbReference>
<dbReference type="GO" id="GO:0006435">
    <property type="term" value="P:threonyl-tRNA aminoacylation"/>
    <property type="evidence" value="ECO:0007669"/>
    <property type="project" value="UniProtKB-UniRule"/>
</dbReference>
<dbReference type="CDD" id="cd01667">
    <property type="entry name" value="TGS_ThrRS"/>
    <property type="match status" value="1"/>
</dbReference>
<dbReference type="CDD" id="cd00860">
    <property type="entry name" value="ThrRS_anticodon"/>
    <property type="match status" value="1"/>
</dbReference>
<dbReference type="CDD" id="cd00771">
    <property type="entry name" value="ThrRS_core"/>
    <property type="match status" value="1"/>
</dbReference>
<dbReference type="FunFam" id="3.10.20.30:FF:000005">
    <property type="entry name" value="Threonine--tRNA ligase"/>
    <property type="match status" value="1"/>
</dbReference>
<dbReference type="FunFam" id="3.30.54.20:FF:000002">
    <property type="entry name" value="Threonine--tRNA ligase"/>
    <property type="match status" value="1"/>
</dbReference>
<dbReference type="FunFam" id="3.30.930.10:FF:000002">
    <property type="entry name" value="Threonine--tRNA ligase"/>
    <property type="match status" value="1"/>
</dbReference>
<dbReference type="FunFam" id="3.40.50.800:FF:000001">
    <property type="entry name" value="Threonine--tRNA ligase"/>
    <property type="match status" value="1"/>
</dbReference>
<dbReference type="FunFam" id="3.30.980.10:FF:000005">
    <property type="entry name" value="Threonyl-tRNA synthetase, mitochondrial"/>
    <property type="match status" value="1"/>
</dbReference>
<dbReference type="Gene3D" id="3.10.20.30">
    <property type="match status" value="1"/>
</dbReference>
<dbReference type="Gene3D" id="3.30.54.20">
    <property type="match status" value="1"/>
</dbReference>
<dbReference type="Gene3D" id="3.40.50.800">
    <property type="entry name" value="Anticodon-binding domain"/>
    <property type="match status" value="1"/>
</dbReference>
<dbReference type="Gene3D" id="3.30.930.10">
    <property type="entry name" value="Bira Bifunctional Protein, Domain 2"/>
    <property type="match status" value="1"/>
</dbReference>
<dbReference type="Gene3D" id="3.30.980.10">
    <property type="entry name" value="Threonyl-trna Synthetase, Chain A, domain 2"/>
    <property type="match status" value="1"/>
</dbReference>
<dbReference type="HAMAP" id="MF_00184">
    <property type="entry name" value="Thr_tRNA_synth"/>
    <property type="match status" value="1"/>
</dbReference>
<dbReference type="InterPro" id="IPR002314">
    <property type="entry name" value="aa-tRNA-synt_IIb"/>
</dbReference>
<dbReference type="InterPro" id="IPR006195">
    <property type="entry name" value="aa-tRNA-synth_II"/>
</dbReference>
<dbReference type="InterPro" id="IPR045864">
    <property type="entry name" value="aa-tRNA-synth_II/BPL/LPL"/>
</dbReference>
<dbReference type="InterPro" id="IPR004154">
    <property type="entry name" value="Anticodon-bd"/>
</dbReference>
<dbReference type="InterPro" id="IPR036621">
    <property type="entry name" value="Anticodon-bd_dom_sf"/>
</dbReference>
<dbReference type="InterPro" id="IPR012675">
    <property type="entry name" value="Beta-grasp_dom_sf"/>
</dbReference>
<dbReference type="InterPro" id="IPR004095">
    <property type="entry name" value="TGS"/>
</dbReference>
<dbReference type="InterPro" id="IPR012676">
    <property type="entry name" value="TGS-like"/>
</dbReference>
<dbReference type="InterPro" id="IPR002320">
    <property type="entry name" value="Thr-tRNA-ligase_IIa"/>
</dbReference>
<dbReference type="InterPro" id="IPR018163">
    <property type="entry name" value="Thr/Ala-tRNA-synth_IIc_edit"/>
</dbReference>
<dbReference type="InterPro" id="IPR047246">
    <property type="entry name" value="ThrRS_anticodon"/>
</dbReference>
<dbReference type="InterPro" id="IPR033728">
    <property type="entry name" value="ThrRS_core"/>
</dbReference>
<dbReference type="InterPro" id="IPR012947">
    <property type="entry name" value="tRNA_SAD"/>
</dbReference>
<dbReference type="NCBIfam" id="TIGR00418">
    <property type="entry name" value="thrS"/>
    <property type="match status" value="1"/>
</dbReference>
<dbReference type="PANTHER" id="PTHR11451:SF44">
    <property type="entry name" value="THREONINE--TRNA LIGASE, CHLOROPLASTIC_MITOCHONDRIAL 2"/>
    <property type="match status" value="1"/>
</dbReference>
<dbReference type="PANTHER" id="PTHR11451">
    <property type="entry name" value="THREONINE-TRNA LIGASE"/>
    <property type="match status" value="1"/>
</dbReference>
<dbReference type="Pfam" id="PF03129">
    <property type="entry name" value="HGTP_anticodon"/>
    <property type="match status" value="1"/>
</dbReference>
<dbReference type="Pfam" id="PF02824">
    <property type="entry name" value="TGS"/>
    <property type="match status" value="1"/>
</dbReference>
<dbReference type="Pfam" id="PF00587">
    <property type="entry name" value="tRNA-synt_2b"/>
    <property type="match status" value="1"/>
</dbReference>
<dbReference type="Pfam" id="PF07973">
    <property type="entry name" value="tRNA_SAD"/>
    <property type="match status" value="1"/>
</dbReference>
<dbReference type="PRINTS" id="PR01047">
    <property type="entry name" value="TRNASYNTHTHR"/>
</dbReference>
<dbReference type="SMART" id="SM00863">
    <property type="entry name" value="tRNA_SAD"/>
    <property type="match status" value="1"/>
</dbReference>
<dbReference type="SUPFAM" id="SSF52954">
    <property type="entry name" value="Class II aaRS ABD-related"/>
    <property type="match status" value="1"/>
</dbReference>
<dbReference type="SUPFAM" id="SSF55681">
    <property type="entry name" value="Class II aaRS and biotin synthetases"/>
    <property type="match status" value="1"/>
</dbReference>
<dbReference type="SUPFAM" id="SSF81271">
    <property type="entry name" value="TGS-like"/>
    <property type="match status" value="1"/>
</dbReference>
<dbReference type="SUPFAM" id="SSF55186">
    <property type="entry name" value="ThrRS/AlaRS common domain"/>
    <property type="match status" value="1"/>
</dbReference>
<dbReference type="PROSITE" id="PS50862">
    <property type="entry name" value="AA_TRNA_LIGASE_II"/>
    <property type="match status" value="1"/>
</dbReference>
<dbReference type="PROSITE" id="PS51880">
    <property type="entry name" value="TGS"/>
    <property type="match status" value="1"/>
</dbReference>
<comment type="function">
    <text evidence="1">Catalyzes the attachment of threonine to tRNA(Thr) in a two-step reaction: L-threonine is first activated by ATP to form Thr-AMP and then transferred to the acceptor end of tRNA(Thr). Also edits incorrectly charged L-seryl-tRNA(Thr).</text>
</comment>
<comment type="catalytic activity">
    <reaction evidence="1">
        <text>tRNA(Thr) + L-threonine + ATP = L-threonyl-tRNA(Thr) + AMP + diphosphate + H(+)</text>
        <dbReference type="Rhea" id="RHEA:24624"/>
        <dbReference type="Rhea" id="RHEA-COMP:9670"/>
        <dbReference type="Rhea" id="RHEA-COMP:9704"/>
        <dbReference type="ChEBI" id="CHEBI:15378"/>
        <dbReference type="ChEBI" id="CHEBI:30616"/>
        <dbReference type="ChEBI" id="CHEBI:33019"/>
        <dbReference type="ChEBI" id="CHEBI:57926"/>
        <dbReference type="ChEBI" id="CHEBI:78442"/>
        <dbReference type="ChEBI" id="CHEBI:78534"/>
        <dbReference type="ChEBI" id="CHEBI:456215"/>
        <dbReference type="EC" id="6.1.1.3"/>
    </reaction>
</comment>
<comment type="cofactor">
    <cofactor evidence="1">
        <name>Zn(2+)</name>
        <dbReference type="ChEBI" id="CHEBI:29105"/>
    </cofactor>
    <text evidence="1">Binds 1 zinc ion per subunit.</text>
</comment>
<comment type="subunit">
    <text evidence="1">Homodimer.</text>
</comment>
<comment type="subcellular location">
    <subcellularLocation>
        <location evidence="1">Cytoplasm</location>
    </subcellularLocation>
</comment>
<comment type="similarity">
    <text evidence="1">Belongs to the class-II aminoacyl-tRNA synthetase family.</text>
</comment>
<organism>
    <name type="scientific">Haemophilus influenzae (strain 86-028NP)</name>
    <dbReference type="NCBI Taxonomy" id="281310"/>
    <lineage>
        <taxon>Bacteria</taxon>
        <taxon>Pseudomonadati</taxon>
        <taxon>Pseudomonadota</taxon>
        <taxon>Gammaproteobacteria</taxon>
        <taxon>Pasteurellales</taxon>
        <taxon>Pasteurellaceae</taxon>
        <taxon>Haemophilus</taxon>
    </lineage>
</organism>
<evidence type="ECO:0000255" key="1">
    <source>
        <dbReference type="HAMAP-Rule" id="MF_00184"/>
    </source>
</evidence>
<evidence type="ECO:0000255" key="2">
    <source>
        <dbReference type="PROSITE-ProRule" id="PRU01228"/>
    </source>
</evidence>
<gene>
    <name evidence="1" type="primary">thrS</name>
    <name type="ordered locus">NTHI1797</name>
</gene>
<feature type="chain" id="PRO_1000020397" description="Threonine--tRNA ligase">
    <location>
        <begin position="1"/>
        <end position="643"/>
    </location>
</feature>
<feature type="domain" description="TGS" evidence="2">
    <location>
        <begin position="1"/>
        <end position="61"/>
    </location>
</feature>
<feature type="region of interest" description="Catalytic" evidence="1">
    <location>
        <begin position="243"/>
        <end position="534"/>
    </location>
</feature>
<feature type="binding site" evidence="1">
    <location>
        <position position="334"/>
    </location>
    <ligand>
        <name>Zn(2+)</name>
        <dbReference type="ChEBI" id="CHEBI:29105"/>
    </ligand>
</feature>
<feature type="binding site" evidence="1">
    <location>
        <position position="385"/>
    </location>
    <ligand>
        <name>Zn(2+)</name>
        <dbReference type="ChEBI" id="CHEBI:29105"/>
    </ligand>
</feature>
<feature type="binding site" evidence="1">
    <location>
        <position position="511"/>
    </location>
    <ligand>
        <name>Zn(2+)</name>
        <dbReference type="ChEBI" id="CHEBI:29105"/>
    </ligand>
</feature>